<organism>
    <name type="scientific">Borreliella burgdorferi (strain ATCC 35210 / DSM 4680 / CIP 102532 / B31)</name>
    <name type="common">Borrelia burgdorferi</name>
    <dbReference type="NCBI Taxonomy" id="224326"/>
    <lineage>
        <taxon>Bacteria</taxon>
        <taxon>Pseudomonadati</taxon>
        <taxon>Spirochaetota</taxon>
        <taxon>Spirochaetia</taxon>
        <taxon>Spirochaetales</taxon>
        <taxon>Borreliaceae</taxon>
        <taxon>Borreliella</taxon>
    </lineage>
</organism>
<sequence>MNKLEEHYIVPKDVVAELDKYIIGQDEAKKLVSIALVNRYIRSRLPKEIKDEVMPKNIIMIGSTGIGKTEIARRLSKLIKAPFIKVEATKYTEVGYVGRDVESMVRDLMSIAVNMVKEEMYSTVRDDALVRTEERIVDSLFKGSSNSENMDPNEIKAEEKVKEKLRKKLRAGELDDTTIEIQISSKMPFSTIEIFTGGNFEEIDMGIGGLLGNIFDRKKKRELKIKKAKEIILAEELEKLVDHENISDIAKSKVENMGIIFIDEIDKIAAKNRSGNDVSREGVQRDILPIIEGSKVNTKYGIVDTSHILFIAAGAFNLAKPSDLIPELQGRFPIKVELKSLSIDDLKKILKQTKNSLIKQYVAMFKVYDLDLKFSEEAIDRIAELTFNMNLESENLGARRLHGVMEIVLADLFFEVPGSKLKKFEINLDYVNKKIQINEQKDLNYYII</sequence>
<evidence type="ECO:0000255" key="1">
    <source>
        <dbReference type="HAMAP-Rule" id="MF_00249"/>
    </source>
</evidence>
<evidence type="ECO:0000305" key="2"/>
<accession>Q44772</accession>
<accession>Q57063</accession>
<proteinExistence type="inferred from homology"/>
<comment type="function">
    <text evidence="1">ATPase subunit of a proteasome-like degradation complex; this subunit has chaperone activity. The binding of ATP and its subsequent hydrolysis by HslU are essential for unfolding of protein substrates subsequently hydrolyzed by HslV. HslU recognizes the N-terminal part of its protein substrates and unfolds these before they are guided to HslV for hydrolysis.</text>
</comment>
<comment type="subunit">
    <text evidence="1">A double ring-shaped homohexamer of HslV is capped on each side by a ring-shaped HslU homohexamer. The assembly of the HslU/HslV complex is dependent on binding of ATP.</text>
</comment>
<comment type="subcellular location">
    <subcellularLocation>
        <location evidence="1">Cytoplasm</location>
    </subcellularLocation>
</comment>
<comment type="similarity">
    <text evidence="1">Belongs to the ClpX chaperone family. HslU subfamily.</text>
</comment>
<protein>
    <recommendedName>
        <fullName evidence="1">ATP-dependent protease ATPase subunit HslU</fullName>
    </recommendedName>
    <alternativeName>
        <fullName evidence="1">Unfoldase HslU</fullName>
    </alternativeName>
</protein>
<dbReference type="EMBL" id="U43739">
    <property type="protein sequence ID" value="AAA85618.1"/>
    <property type="molecule type" value="Genomic_DNA"/>
</dbReference>
<dbReference type="EMBL" id="X96685">
    <property type="protein sequence ID" value="CAA65468.1"/>
    <property type="molecule type" value="Genomic_DNA"/>
</dbReference>
<dbReference type="EMBL" id="L76303">
    <property type="protein sequence ID" value="AAB51406.1"/>
    <property type="molecule type" value="Genomic_DNA"/>
</dbReference>
<dbReference type="EMBL" id="AE000783">
    <property type="protein sequence ID" value="AAC66653.2"/>
    <property type="molecule type" value="Genomic_DNA"/>
</dbReference>
<dbReference type="PIR" id="G70136">
    <property type="entry name" value="G70136"/>
</dbReference>
<dbReference type="RefSeq" id="NP_212429.2">
    <property type="nucleotide sequence ID" value="NC_001318.1"/>
</dbReference>
<dbReference type="RefSeq" id="WP_002656077.1">
    <property type="nucleotide sequence ID" value="NC_001318.1"/>
</dbReference>
<dbReference type="SMR" id="Q44772"/>
<dbReference type="STRING" id="224326.BB_0295"/>
<dbReference type="PaxDb" id="224326-BB_0295"/>
<dbReference type="EnsemblBacteria" id="AAC66653">
    <property type="protein sequence ID" value="AAC66653"/>
    <property type="gene ID" value="BB_0295"/>
</dbReference>
<dbReference type="KEGG" id="bbu:BB_0295"/>
<dbReference type="PATRIC" id="fig|224326.49.peg.694"/>
<dbReference type="HOGENOM" id="CLU_033123_0_0_12"/>
<dbReference type="OrthoDB" id="9804062at2"/>
<dbReference type="Proteomes" id="UP000001807">
    <property type="component" value="Chromosome"/>
</dbReference>
<dbReference type="GO" id="GO:0005829">
    <property type="term" value="C:cytosol"/>
    <property type="evidence" value="ECO:0000314"/>
    <property type="project" value="CAFA"/>
</dbReference>
<dbReference type="GO" id="GO:0009376">
    <property type="term" value="C:HslUV protease complex"/>
    <property type="evidence" value="ECO:0007669"/>
    <property type="project" value="UniProtKB-UniRule"/>
</dbReference>
<dbReference type="GO" id="GO:0005524">
    <property type="term" value="F:ATP binding"/>
    <property type="evidence" value="ECO:0007669"/>
    <property type="project" value="UniProtKB-UniRule"/>
</dbReference>
<dbReference type="GO" id="GO:0016887">
    <property type="term" value="F:ATP hydrolysis activity"/>
    <property type="evidence" value="ECO:0007669"/>
    <property type="project" value="InterPro"/>
</dbReference>
<dbReference type="GO" id="GO:0008233">
    <property type="term" value="F:peptidase activity"/>
    <property type="evidence" value="ECO:0007669"/>
    <property type="project" value="InterPro"/>
</dbReference>
<dbReference type="GO" id="GO:0036402">
    <property type="term" value="F:proteasome-activating activity"/>
    <property type="evidence" value="ECO:0007669"/>
    <property type="project" value="UniProtKB-UniRule"/>
</dbReference>
<dbReference type="GO" id="GO:0043335">
    <property type="term" value="P:protein unfolding"/>
    <property type="evidence" value="ECO:0007669"/>
    <property type="project" value="UniProtKB-UniRule"/>
</dbReference>
<dbReference type="GO" id="GO:0051603">
    <property type="term" value="P:proteolysis involved in protein catabolic process"/>
    <property type="evidence" value="ECO:0007669"/>
    <property type="project" value="TreeGrafter"/>
</dbReference>
<dbReference type="CDD" id="cd19498">
    <property type="entry name" value="RecA-like_HslU"/>
    <property type="match status" value="1"/>
</dbReference>
<dbReference type="Gene3D" id="1.10.8.60">
    <property type="match status" value="1"/>
</dbReference>
<dbReference type="Gene3D" id="1.10.8.10">
    <property type="entry name" value="DNA helicase RuvA subunit, C-terminal domain"/>
    <property type="match status" value="1"/>
</dbReference>
<dbReference type="Gene3D" id="3.40.50.300">
    <property type="entry name" value="P-loop containing nucleotide triphosphate hydrolases"/>
    <property type="match status" value="1"/>
</dbReference>
<dbReference type="HAMAP" id="MF_00249">
    <property type="entry name" value="HslU"/>
    <property type="match status" value="1"/>
</dbReference>
<dbReference type="InterPro" id="IPR003593">
    <property type="entry name" value="AAA+_ATPase"/>
</dbReference>
<dbReference type="InterPro" id="IPR050052">
    <property type="entry name" value="ATP-dep_Clp_protease_ClpX"/>
</dbReference>
<dbReference type="InterPro" id="IPR003959">
    <property type="entry name" value="ATPase_AAA_core"/>
</dbReference>
<dbReference type="InterPro" id="IPR011704">
    <property type="entry name" value="ATPase_dyneun-rel_AAA"/>
</dbReference>
<dbReference type="InterPro" id="IPR019489">
    <property type="entry name" value="Clp_ATPase_C"/>
</dbReference>
<dbReference type="InterPro" id="IPR004491">
    <property type="entry name" value="HslU"/>
</dbReference>
<dbReference type="InterPro" id="IPR027417">
    <property type="entry name" value="P-loop_NTPase"/>
</dbReference>
<dbReference type="NCBIfam" id="TIGR00390">
    <property type="entry name" value="hslU"/>
    <property type="match status" value="1"/>
</dbReference>
<dbReference type="NCBIfam" id="NF003544">
    <property type="entry name" value="PRK05201.1"/>
    <property type="match status" value="1"/>
</dbReference>
<dbReference type="PANTHER" id="PTHR48102">
    <property type="entry name" value="ATP-DEPENDENT CLP PROTEASE ATP-BINDING SUBUNIT CLPX-LIKE, MITOCHONDRIAL-RELATED"/>
    <property type="match status" value="1"/>
</dbReference>
<dbReference type="PANTHER" id="PTHR48102:SF3">
    <property type="entry name" value="ATP-DEPENDENT PROTEASE ATPASE SUBUNIT HSLU"/>
    <property type="match status" value="1"/>
</dbReference>
<dbReference type="Pfam" id="PF07724">
    <property type="entry name" value="AAA_2"/>
    <property type="match status" value="1"/>
</dbReference>
<dbReference type="Pfam" id="PF07728">
    <property type="entry name" value="AAA_5"/>
    <property type="match status" value="1"/>
</dbReference>
<dbReference type="SMART" id="SM00382">
    <property type="entry name" value="AAA"/>
    <property type="match status" value="1"/>
</dbReference>
<dbReference type="SMART" id="SM01086">
    <property type="entry name" value="ClpB_D2-small"/>
    <property type="match status" value="1"/>
</dbReference>
<dbReference type="SUPFAM" id="SSF52540">
    <property type="entry name" value="P-loop containing nucleoside triphosphate hydrolases"/>
    <property type="match status" value="1"/>
</dbReference>
<feature type="chain" id="PRO_0000160480" description="ATP-dependent protease ATPase subunit HslU">
    <location>
        <begin position="1"/>
        <end position="448"/>
    </location>
</feature>
<feature type="binding site" evidence="1">
    <location>
        <position position="23"/>
    </location>
    <ligand>
        <name>ATP</name>
        <dbReference type="ChEBI" id="CHEBI:30616"/>
    </ligand>
</feature>
<feature type="binding site" evidence="1">
    <location>
        <begin position="65"/>
        <end position="70"/>
    </location>
    <ligand>
        <name>ATP</name>
        <dbReference type="ChEBI" id="CHEBI:30616"/>
    </ligand>
</feature>
<feature type="binding site" evidence="1">
    <location>
        <position position="263"/>
    </location>
    <ligand>
        <name>ATP</name>
        <dbReference type="ChEBI" id="CHEBI:30616"/>
    </ligand>
</feature>
<feature type="binding site" evidence="1">
    <location>
        <position position="327"/>
    </location>
    <ligand>
        <name>ATP</name>
        <dbReference type="ChEBI" id="CHEBI:30616"/>
    </ligand>
</feature>
<feature type="binding site" evidence="1">
    <location>
        <position position="399"/>
    </location>
    <ligand>
        <name>ATP</name>
        <dbReference type="ChEBI" id="CHEBI:30616"/>
    </ligand>
</feature>
<feature type="sequence conflict" description="In Ref. 2." evidence="2" ref="2">
    <original>S</original>
    <variation>G</variation>
    <location>
        <position position="110"/>
    </location>
</feature>
<feature type="sequence conflict" description="In Ref. 2." evidence="2" ref="2">
    <original>A</original>
    <variation>R</variation>
    <location>
        <position position="112"/>
    </location>
</feature>
<feature type="sequence conflict" description="In Ref. 2; CAA65468/AAB51406." evidence="2" ref="2">
    <original>D</original>
    <variation>E</variation>
    <location>
        <position position="126"/>
    </location>
</feature>
<feature type="sequence conflict" description="In Ref. 2; CAA65468/AAB51406." evidence="2" ref="2">
    <original>VR</original>
    <variation>IK</variation>
    <location>
        <begin position="130"/>
        <end position="131"/>
    </location>
</feature>
<feature type="sequence conflict" description="In Ref. 2; CAA65468/AAB51406." evidence="2" ref="2">
    <original>D</original>
    <variation>E</variation>
    <location>
        <position position="138"/>
    </location>
</feature>
<feature type="sequence conflict" description="In Ref. 2; CAA65468/AAB51406." evidence="2" ref="2">
    <original>S</original>
    <variation>D</variation>
    <location>
        <position position="145"/>
    </location>
</feature>
<feature type="sequence conflict" description="In Ref. 2; CAA65468/AAB51406." evidence="2" ref="2">
    <original>M</original>
    <variation>I</variation>
    <location>
        <position position="150"/>
    </location>
</feature>
<name>HSLU_BORBU</name>
<keyword id="KW-0067">ATP-binding</keyword>
<keyword id="KW-0143">Chaperone</keyword>
<keyword id="KW-0963">Cytoplasm</keyword>
<keyword id="KW-0547">Nucleotide-binding</keyword>
<keyword id="KW-1185">Reference proteome</keyword>
<reference key="1">
    <citation type="submission" date="1995-12" db="EMBL/GenBank/DDBJ databases">
        <authorList>
            <person name="Dunn J.J."/>
            <person name="Butler-Loffredo L."/>
            <person name="Kieleczawa J."/>
            <person name="Medalle J."/>
            <person name="Luft B.J."/>
        </authorList>
    </citation>
    <scope>NUCLEOTIDE SEQUENCE [GENOMIC DNA]</scope>
    <source>
        <strain>ATCC 35210 / DSM 4680 / CIP 102532 / B31</strain>
    </source>
</reference>
<reference key="2">
    <citation type="submission" date="1996-03" db="EMBL/GenBank/DDBJ databases">
        <authorList>
            <person name="Ge Y."/>
            <person name="Old I.G."/>
            <person name="Saint-Girons I."/>
            <person name="Charon N.W."/>
        </authorList>
    </citation>
    <scope>NUCLEOTIDE SEQUENCE [GENOMIC DNA]</scope>
    <source>
        <strain>212</strain>
    </source>
</reference>
<reference key="3">
    <citation type="journal article" date="1997" name="Nature">
        <title>Genomic sequence of a Lyme disease spirochaete, Borrelia burgdorferi.</title>
        <authorList>
            <person name="Fraser C.M."/>
            <person name="Casjens S."/>
            <person name="Huang W.M."/>
            <person name="Sutton G.G."/>
            <person name="Clayton R.A."/>
            <person name="Lathigra R."/>
            <person name="White O."/>
            <person name="Ketchum K.A."/>
            <person name="Dodson R.J."/>
            <person name="Hickey E.K."/>
            <person name="Gwinn M.L."/>
            <person name="Dougherty B.A."/>
            <person name="Tomb J.-F."/>
            <person name="Fleischmann R.D."/>
            <person name="Richardson D.L."/>
            <person name="Peterson J.D."/>
            <person name="Kerlavage A.R."/>
            <person name="Quackenbush J."/>
            <person name="Salzberg S.L."/>
            <person name="Hanson M."/>
            <person name="van Vugt R."/>
            <person name="Palmer N."/>
            <person name="Adams M.D."/>
            <person name="Gocayne J.D."/>
            <person name="Weidman J.F."/>
            <person name="Utterback T.R."/>
            <person name="Watthey L."/>
            <person name="McDonald L.A."/>
            <person name="Artiach P."/>
            <person name="Bowman C."/>
            <person name="Garland S.A."/>
            <person name="Fujii C."/>
            <person name="Cotton M.D."/>
            <person name="Horst K."/>
            <person name="Roberts K.M."/>
            <person name="Hatch B."/>
            <person name="Smith H.O."/>
            <person name="Venter J.C."/>
        </authorList>
    </citation>
    <scope>NUCLEOTIDE SEQUENCE [LARGE SCALE GENOMIC DNA]</scope>
    <source>
        <strain>ATCC 35210 / DSM 4680 / CIP 102532 / B31</strain>
    </source>
</reference>
<gene>
    <name evidence="1" type="primary">hslU</name>
    <name type="ordered locus">BB_0295</name>
</gene>